<name>CVFC_STAAR</name>
<evidence type="ECO:0000250" key="1"/>
<evidence type="ECO:0000305" key="2"/>
<proteinExistence type="inferred from homology"/>
<organism>
    <name type="scientific">Staphylococcus aureus (strain MRSA252)</name>
    <dbReference type="NCBI Taxonomy" id="282458"/>
    <lineage>
        <taxon>Bacteria</taxon>
        <taxon>Bacillati</taxon>
        <taxon>Bacillota</taxon>
        <taxon>Bacilli</taxon>
        <taxon>Bacillales</taxon>
        <taxon>Staphylococcaceae</taxon>
        <taxon>Staphylococcus</taxon>
    </lineage>
</organism>
<reference key="1">
    <citation type="journal article" date="2004" name="Proc. Natl. Acad. Sci. U.S.A.">
        <title>Complete genomes of two clinical Staphylococcus aureus strains: evidence for the rapid evolution of virulence and drug resistance.</title>
        <authorList>
            <person name="Holden M.T.G."/>
            <person name="Feil E.J."/>
            <person name="Lindsay J.A."/>
            <person name="Peacock S.J."/>
            <person name="Day N.P.J."/>
            <person name="Enright M.C."/>
            <person name="Foster T.J."/>
            <person name="Moore C.E."/>
            <person name="Hurst L."/>
            <person name="Atkin R."/>
            <person name="Barron A."/>
            <person name="Bason N."/>
            <person name="Bentley S.D."/>
            <person name="Chillingworth C."/>
            <person name="Chillingworth T."/>
            <person name="Churcher C."/>
            <person name="Clark L."/>
            <person name="Corton C."/>
            <person name="Cronin A."/>
            <person name="Doggett J."/>
            <person name="Dowd L."/>
            <person name="Feltwell T."/>
            <person name="Hance Z."/>
            <person name="Harris B."/>
            <person name="Hauser H."/>
            <person name="Holroyd S."/>
            <person name="Jagels K."/>
            <person name="James K.D."/>
            <person name="Lennard N."/>
            <person name="Line A."/>
            <person name="Mayes R."/>
            <person name="Moule S."/>
            <person name="Mungall K."/>
            <person name="Ormond D."/>
            <person name="Quail M.A."/>
            <person name="Rabbinowitsch E."/>
            <person name="Rutherford K.M."/>
            <person name="Sanders M."/>
            <person name="Sharp S."/>
            <person name="Simmonds M."/>
            <person name="Stevens K."/>
            <person name="Whitehead S."/>
            <person name="Barrell B.G."/>
            <person name="Spratt B.G."/>
            <person name="Parkhill J."/>
        </authorList>
    </citation>
    <scope>NUCLEOTIDE SEQUENCE [LARGE SCALE GENOMIC DNA]</scope>
    <source>
        <strain>MRSA252</strain>
    </source>
</reference>
<protein>
    <recommendedName>
        <fullName>Conserved virulence factor C</fullName>
    </recommendedName>
</protein>
<dbReference type="EMBL" id="BX571856">
    <property type="protein sequence ID" value="CAG40439.1"/>
    <property type="molecule type" value="Genomic_DNA"/>
</dbReference>
<dbReference type="RefSeq" id="WP_000404628.1">
    <property type="nucleotide sequence ID" value="NC_002952.2"/>
</dbReference>
<dbReference type="SMR" id="Q6GGX8"/>
<dbReference type="KEGG" id="sar:SAR1442"/>
<dbReference type="HOGENOM" id="CLU_733295_0_0_9"/>
<dbReference type="Proteomes" id="UP000000596">
    <property type="component" value="Chromosome"/>
</dbReference>
<dbReference type="GO" id="GO:0016491">
    <property type="term" value="F:oxidoreductase activity"/>
    <property type="evidence" value="ECO:0007669"/>
    <property type="project" value="TreeGrafter"/>
</dbReference>
<dbReference type="Gene3D" id="1.25.10.10">
    <property type="entry name" value="Leucine-rich Repeat Variant"/>
    <property type="match status" value="1"/>
</dbReference>
<dbReference type="Gene3D" id="3.30.1370.70">
    <property type="entry name" value="Scaffold protein Nfu/NifU, N-terminal domain"/>
    <property type="match status" value="1"/>
</dbReference>
<dbReference type="InterPro" id="IPR011989">
    <property type="entry name" value="ARM-like"/>
</dbReference>
<dbReference type="InterPro" id="IPR016024">
    <property type="entry name" value="ARM-type_fold"/>
</dbReference>
<dbReference type="InterPro" id="IPR014824">
    <property type="entry name" value="Nfu/NifU_N"/>
</dbReference>
<dbReference type="InterPro" id="IPR036498">
    <property type="entry name" value="Nfu/NifU_N_sf"/>
</dbReference>
<dbReference type="InterPro" id="IPR004155">
    <property type="entry name" value="PBS_lyase_HEAT"/>
</dbReference>
<dbReference type="InterPro" id="IPR025989">
    <property type="entry name" value="Virulence_F_dom"/>
</dbReference>
<dbReference type="PANTHER" id="PTHR12697:SF37">
    <property type="entry name" value="CONSERVED VIRULENCE FACTOR C"/>
    <property type="match status" value="1"/>
</dbReference>
<dbReference type="PANTHER" id="PTHR12697">
    <property type="entry name" value="PBS LYASE HEAT-LIKE PROTEIN"/>
    <property type="match status" value="1"/>
</dbReference>
<dbReference type="Pfam" id="PF13646">
    <property type="entry name" value="HEAT_2"/>
    <property type="match status" value="1"/>
</dbReference>
<dbReference type="Pfam" id="PF08712">
    <property type="entry name" value="Nfu_N"/>
    <property type="match status" value="1"/>
</dbReference>
<dbReference type="Pfam" id="PF13769">
    <property type="entry name" value="Virulence_fact"/>
    <property type="match status" value="1"/>
</dbReference>
<dbReference type="SMART" id="SM00567">
    <property type="entry name" value="EZ_HEAT"/>
    <property type="match status" value="3"/>
</dbReference>
<dbReference type="SMART" id="SM00932">
    <property type="entry name" value="Nfu_N"/>
    <property type="match status" value="1"/>
</dbReference>
<dbReference type="SUPFAM" id="SSF48371">
    <property type="entry name" value="ARM repeat"/>
    <property type="match status" value="1"/>
</dbReference>
<dbReference type="SUPFAM" id="SSF110836">
    <property type="entry name" value="Hypothetical protein SAV1430"/>
    <property type="match status" value="1"/>
</dbReference>
<keyword id="KW-0843">Virulence</keyword>
<sequence>MEILRIEPTPSPNTMKVVLSYTREDKLSNTYKKVEENQPRFINQLLSIDGITSIFHVMNFLAVDKAPKADWEDILPDIKAAFSGESQVLESGKDPQIDNHFGEIKAELLTFKGIPYQIKLTSADQELREQLPQTYVDHMTQAQTKHDNIVFMRKWLDLGNRYGNIEEVMDGVLEEVLATYPESQLPVLVKHALEENHATNNYHFYRHVSLDEYHATDNWKTRLRMLNHFPKPTFEDIPLLDLALSDEKVPVRRQAIVLLGMIESKEILPYLYKGLRDKSPAVRRTAGDCISDLGYPEALPEMVLLLDDPQKIVRWRAAMFIFDEGNAEQLPALKAHINDNAFEVKLQIEMAISRIENGDEALGSVWKQMTNRTI</sequence>
<comment type="function">
    <text evidence="1">Required for hemolysin production.</text>
</comment>
<comment type="similarity">
    <text evidence="2">Belongs to the CvfC family.</text>
</comment>
<gene>
    <name type="primary">cvfC</name>
    <name type="ordered locus">SAR1442</name>
</gene>
<feature type="chain" id="PRO_0000282304" description="Conserved virulence factor C">
    <location>
        <begin position="1"/>
        <end position="374"/>
    </location>
</feature>
<accession>Q6GGX8</accession>